<gene>
    <name type="primary">PDF1B</name>
    <name type="synonym">DEF2</name>
    <name type="ordered locus">At5g14660</name>
    <name type="ORF">T15N1_150</name>
</gene>
<name>DEF1B_ARATH</name>
<protein>
    <recommendedName>
        <fullName>Peptide deformylase 1B, chloroplastic/mitochondrial</fullName>
        <shortName>AtDEF2</shortName>
        <shortName>AtPDF1B</shortName>
        <shortName>PDF 1B</shortName>
        <ecNumber evidence="5 8">3.5.1.88</ecNumber>
    </recommendedName>
    <alternativeName>
        <fullName>Polypeptide deformylase</fullName>
    </alternativeName>
</protein>
<organism>
    <name type="scientific">Arabidopsis thaliana</name>
    <name type="common">Mouse-ear cress</name>
    <dbReference type="NCBI Taxonomy" id="3702"/>
    <lineage>
        <taxon>Eukaryota</taxon>
        <taxon>Viridiplantae</taxon>
        <taxon>Streptophyta</taxon>
        <taxon>Embryophyta</taxon>
        <taxon>Tracheophyta</taxon>
        <taxon>Spermatophyta</taxon>
        <taxon>Magnoliopsida</taxon>
        <taxon>eudicotyledons</taxon>
        <taxon>Gunneridae</taxon>
        <taxon>Pentapetalae</taxon>
        <taxon>rosids</taxon>
        <taxon>malvids</taxon>
        <taxon>Brassicales</taxon>
        <taxon>Brassicaceae</taxon>
        <taxon>Camelineae</taxon>
        <taxon>Arabidopsis</taxon>
    </lineage>
</organism>
<feature type="transit peptide" description="Chloroplast and mitochondrion" evidence="2">
    <location>
        <begin position="1"/>
        <end position="56"/>
    </location>
</feature>
<feature type="chain" id="PRO_0000006732" description="Peptide deformylase 1B, chloroplastic/mitochondrial">
    <location>
        <begin position="57"/>
        <end position="273"/>
    </location>
</feature>
<feature type="region of interest" description="Disordered" evidence="3">
    <location>
        <begin position="246"/>
        <end position="273"/>
    </location>
</feature>
<feature type="compositionally biased region" description="Basic and acidic residues" evidence="3">
    <location>
        <begin position="246"/>
        <end position="261"/>
    </location>
</feature>
<feature type="compositionally biased region" description="Basic residues" evidence="3">
    <location>
        <begin position="262"/>
        <end position="273"/>
    </location>
</feature>
<feature type="active site" evidence="1">
    <location>
        <position position="214"/>
    </location>
</feature>
<feature type="binding site">
    <location>
        <position position="171"/>
    </location>
    <ligand>
        <name>Fe cation</name>
        <dbReference type="ChEBI" id="CHEBI:24875"/>
    </ligand>
</feature>
<feature type="binding site">
    <location>
        <position position="213"/>
    </location>
    <ligand>
        <name>Fe cation</name>
        <dbReference type="ChEBI" id="CHEBI:24875"/>
    </ligand>
</feature>
<feature type="binding site">
    <location>
        <position position="217"/>
    </location>
    <ligand>
        <name>Fe cation</name>
        <dbReference type="ChEBI" id="CHEBI:24875"/>
    </ligand>
</feature>
<feature type="mutagenesis site" description="Decrease in substrate affinity." evidence="8">
    <original>Y</original>
    <variation>A</variation>
    <location>
        <position position="178"/>
    </location>
</feature>
<feature type="mutagenesis site" description="Increase in substrate affinity." evidence="8">
    <original>Y</original>
    <variation>F</variation>
    <variation>R</variation>
    <location>
        <position position="178"/>
    </location>
</feature>
<feature type="sequence conflict" description="In Ref. 5; AAM62644." evidence="9" ref="5">
    <original>T</original>
    <variation>N</variation>
    <location>
        <position position="48"/>
    </location>
</feature>
<feature type="sequence conflict" description="In Ref. 1; AAG33980." evidence="9" ref="1">
    <original>R</original>
    <variation>S</variation>
    <location>
        <position position="205"/>
    </location>
</feature>
<feature type="helix" evidence="12">
    <location>
        <begin position="89"/>
        <end position="91"/>
    </location>
</feature>
<feature type="helix" evidence="12">
    <location>
        <begin position="103"/>
        <end position="118"/>
    </location>
</feature>
<feature type="strand" evidence="12">
    <location>
        <begin position="122"/>
        <end position="125"/>
    </location>
</feature>
<feature type="helix" evidence="12">
    <location>
        <begin position="126"/>
        <end position="129"/>
    </location>
</feature>
<feature type="strand" evidence="12">
    <location>
        <begin position="133"/>
        <end position="138"/>
    </location>
</feature>
<feature type="strand" evidence="12">
    <location>
        <begin position="150"/>
        <end position="160"/>
    </location>
</feature>
<feature type="strand" evidence="12">
    <location>
        <begin position="164"/>
        <end position="169"/>
    </location>
</feature>
<feature type="strand" evidence="12">
    <location>
        <begin position="179"/>
        <end position="185"/>
    </location>
</feature>
<feature type="strand" evidence="12">
    <location>
        <begin position="187"/>
        <end position="192"/>
    </location>
</feature>
<feature type="strand" evidence="11">
    <location>
        <begin position="194"/>
        <end position="196"/>
    </location>
</feature>
<feature type="strand" evidence="12">
    <location>
        <begin position="198"/>
        <end position="203"/>
    </location>
</feature>
<feature type="helix" evidence="12">
    <location>
        <begin position="205"/>
        <end position="218"/>
    </location>
</feature>
<feature type="helix" evidence="12">
    <location>
        <begin position="223"/>
        <end position="226"/>
    </location>
</feature>
<feature type="helix" evidence="12">
    <location>
        <begin position="229"/>
        <end position="233"/>
    </location>
</feature>
<feature type="helix" evidence="12">
    <location>
        <begin position="236"/>
        <end position="250"/>
    </location>
</feature>
<feature type="helix" evidence="12">
    <location>
        <begin position="258"/>
        <end position="260"/>
    </location>
</feature>
<accession>Q9FUZ2</accession>
<accession>Q8LEH0</accession>
<accession>Q949U8</accession>
<accession>Q9LYJ4</accession>
<reference key="1">
    <citation type="journal article" date="2000" name="EMBO J.">
        <title>Identification of eukaryotic peptide deformylases reveals universality of N-terminal protein processing mechanisms.</title>
        <authorList>
            <person name="Giglione C."/>
            <person name="Serero A."/>
            <person name="Pierre M."/>
            <person name="Boisson B."/>
            <person name="Meinnel T."/>
        </authorList>
    </citation>
    <scope>NUCLEOTIDE SEQUENCE [MRNA]</scope>
    <scope>FUNCTION</scope>
    <scope>TISSUE SPECIFICITY</scope>
    <scope>SUBCELLULAR LOCATION</scope>
</reference>
<reference key="2">
    <citation type="journal article" date="2000" name="Nature">
        <title>Sequence and analysis of chromosome 5 of the plant Arabidopsis thaliana.</title>
        <authorList>
            <person name="Tabata S."/>
            <person name="Kaneko T."/>
            <person name="Nakamura Y."/>
            <person name="Kotani H."/>
            <person name="Kato T."/>
            <person name="Asamizu E."/>
            <person name="Miyajima N."/>
            <person name="Sasamoto S."/>
            <person name="Kimura T."/>
            <person name="Hosouchi T."/>
            <person name="Kawashima K."/>
            <person name="Kohara M."/>
            <person name="Matsumoto M."/>
            <person name="Matsuno A."/>
            <person name="Muraki A."/>
            <person name="Nakayama S."/>
            <person name="Nakazaki N."/>
            <person name="Naruo K."/>
            <person name="Okumura S."/>
            <person name="Shinpo S."/>
            <person name="Takeuchi C."/>
            <person name="Wada T."/>
            <person name="Watanabe A."/>
            <person name="Yamada M."/>
            <person name="Yasuda M."/>
            <person name="Sato S."/>
            <person name="de la Bastide M."/>
            <person name="Huang E."/>
            <person name="Spiegel L."/>
            <person name="Gnoj L."/>
            <person name="O'Shaughnessy A."/>
            <person name="Preston R."/>
            <person name="Habermann K."/>
            <person name="Murray J."/>
            <person name="Johnson D."/>
            <person name="Rohlfing T."/>
            <person name="Nelson J."/>
            <person name="Stoneking T."/>
            <person name="Pepin K."/>
            <person name="Spieth J."/>
            <person name="Sekhon M."/>
            <person name="Armstrong J."/>
            <person name="Becker M."/>
            <person name="Belter E."/>
            <person name="Cordum H."/>
            <person name="Cordes M."/>
            <person name="Courtney L."/>
            <person name="Courtney W."/>
            <person name="Dante M."/>
            <person name="Du H."/>
            <person name="Edwards J."/>
            <person name="Fryman J."/>
            <person name="Haakensen B."/>
            <person name="Lamar E."/>
            <person name="Latreille P."/>
            <person name="Leonard S."/>
            <person name="Meyer R."/>
            <person name="Mulvaney E."/>
            <person name="Ozersky P."/>
            <person name="Riley A."/>
            <person name="Strowmatt C."/>
            <person name="Wagner-McPherson C."/>
            <person name="Wollam A."/>
            <person name="Yoakum M."/>
            <person name="Bell M."/>
            <person name="Dedhia N."/>
            <person name="Parnell L."/>
            <person name="Shah R."/>
            <person name="Rodriguez M."/>
            <person name="Hoon See L."/>
            <person name="Vil D."/>
            <person name="Baker J."/>
            <person name="Kirchoff K."/>
            <person name="Toth K."/>
            <person name="King L."/>
            <person name="Bahret A."/>
            <person name="Miller B."/>
            <person name="Marra M.A."/>
            <person name="Martienssen R."/>
            <person name="McCombie W.R."/>
            <person name="Wilson R.K."/>
            <person name="Murphy G."/>
            <person name="Bancroft I."/>
            <person name="Volckaert G."/>
            <person name="Wambutt R."/>
            <person name="Duesterhoeft A."/>
            <person name="Stiekema W."/>
            <person name="Pohl T."/>
            <person name="Entian K.-D."/>
            <person name="Terryn N."/>
            <person name="Hartley N."/>
            <person name="Bent E."/>
            <person name="Johnson S."/>
            <person name="Langham S.-A."/>
            <person name="McCullagh B."/>
            <person name="Robben J."/>
            <person name="Grymonprez B."/>
            <person name="Zimmermann W."/>
            <person name="Ramsperger U."/>
            <person name="Wedler H."/>
            <person name="Balke K."/>
            <person name="Wedler E."/>
            <person name="Peters S."/>
            <person name="van Staveren M."/>
            <person name="Dirkse W."/>
            <person name="Mooijman P."/>
            <person name="Klein Lankhorst R."/>
            <person name="Weitzenegger T."/>
            <person name="Bothe G."/>
            <person name="Rose M."/>
            <person name="Hauf J."/>
            <person name="Berneiser S."/>
            <person name="Hempel S."/>
            <person name="Feldpausch M."/>
            <person name="Lamberth S."/>
            <person name="Villarroel R."/>
            <person name="Gielen J."/>
            <person name="Ardiles W."/>
            <person name="Bents O."/>
            <person name="Lemcke K."/>
            <person name="Kolesov G."/>
            <person name="Mayer K.F.X."/>
            <person name="Rudd S."/>
            <person name="Schoof H."/>
            <person name="Schueller C."/>
            <person name="Zaccaria P."/>
            <person name="Mewes H.-W."/>
            <person name="Bevan M."/>
            <person name="Fransz P.F."/>
        </authorList>
    </citation>
    <scope>NUCLEOTIDE SEQUENCE [LARGE SCALE GENOMIC DNA]</scope>
    <source>
        <strain>cv. Columbia</strain>
    </source>
</reference>
<reference key="3">
    <citation type="journal article" date="2017" name="Plant J.">
        <title>Araport11: a complete reannotation of the Arabidopsis thaliana reference genome.</title>
        <authorList>
            <person name="Cheng C.Y."/>
            <person name="Krishnakumar V."/>
            <person name="Chan A.P."/>
            <person name="Thibaud-Nissen F."/>
            <person name="Schobel S."/>
            <person name="Town C.D."/>
        </authorList>
    </citation>
    <scope>GENOME REANNOTATION</scope>
    <source>
        <strain>cv. Columbia</strain>
    </source>
</reference>
<reference key="4">
    <citation type="journal article" date="2003" name="Science">
        <title>Empirical analysis of transcriptional activity in the Arabidopsis genome.</title>
        <authorList>
            <person name="Yamada K."/>
            <person name="Lim J."/>
            <person name="Dale J.M."/>
            <person name="Chen H."/>
            <person name="Shinn P."/>
            <person name="Palm C.J."/>
            <person name="Southwick A.M."/>
            <person name="Wu H.C."/>
            <person name="Kim C.J."/>
            <person name="Nguyen M."/>
            <person name="Pham P.K."/>
            <person name="Cheuk R.F."/>
            <person name="Karlin-Newmann G."/>
            <person name="Liu S.X."/>
            <person name="Lam B."/>
            <person name="Sakano H."/>
            <person name="Wu T."/>
            <person name="Yu G."/>
            <person name="Miranda M."/>
            <person name="Quach H.L."/>
            <person name="Tripp M."/>
            <person name="Chang C.H."/>
            <person name="Lee J.M."/>
            <person name="Toriumi M.J."/>
            <person name="Chan M.M."/>
            <person name="Tang C.C."/>
            <person name="Onodera C.S."/>
            <person name="Deng J.M."/>
            <person name="Akiyama K."/>
            <person name="Ansari Y."/>
            <person name="Arakawa T."/>
            <person name="Banh J."/>
            <person name="Banno F."/>
            <person name="Bowser L."/>
            <person name="Brooks S.Y."/>
            <person name="Carninci P."/>
            <person name="Chao Q."/>
            <person name="Choy N."/>
            <person name="Enju A."/>
            <person name="Goldsmith A.D."/>
            <person name="Gurjal M."/>
            <person name="Hansen N.F."/>
            <person name="Hayashizaki Y."/>
            <person name="Johnson-Hopson C."/>
            <person name="Hsuan V.W."/>
            <person name="Iida K."/>
            <person name="Karnes M."/>
            <person name="Khan S."/>
            <person name="Koesema E."/>
            <person name="Ishida J."/>
            <person name="Jiang P.X."/>
            <person name="Jones T."/>
            <person name="Kawai J."/>
            <person name="Kamiya A."/>
            <person name="Meyers C."/>
            <person name="Nakajima M."/>
            <person name="Narusaka M."/>
            <person name="Seki M."/>
            <person name="Sakurai T."/>
            <person name="Satou M."/>
            <person name="Tamse R."/>
            <person name="Vaysberg M."/>
            <person name="Wallender E.K."/>
            <person name="Wong C."/>
            <person name="Yamamura Y."/>
            <person name="Yuan S."/>
            <person name="Shinozaki K."/>
            <person name="Davis R.W."/>
            <person name="Theologis A."/>
            <person name="Ecker J.R."/>
        </authorList>
    </citation>
    <scope>NUCLEOTIDE SEQUENCE [LARGE SCALE MRNA]</scope>
    <source>
        <strain>cv. Columbia</strain>
    </source>
</reference>
<reference key="5">
    <citation type="submission" date="2002-03" db="EMBL/GenBank/DDBJ databases">
        <title>Full-length cDNA from Arabidopsis thaliana.</title>
        <authorList>
            <person name="Brover V.V."/>
            <person name="Troukhan M.E."/>
            <person name="Alexandrov N.A."/>
            <person name="Lu Y.-P."/>
            <person name="Flavell R.B."/>
            <person name="Feldmann K.A."/>
        </authorList>
    </citation>
    <scope>NUCLEOTIDE SEQUENCE [LARGE SCALE MRNA]</scope>
</reference>
<reference key="6">
    <citation type="journal article" date="2001" name="Plant Physiol.">
        <title>Eukaryotic peptide deformylases. Nuclear-encoded and chloroplast-targeted enzymes in Arabidopsis.</title>
        <authorList>
            <person name="Dirk L.M."/>
            <person name="Williams M.A."/>
            <person name="Houtz R.L."/>
        </authorList>
    </citation>
    <scope>SUBCELLULAR LOCATION</scope>
    <scope>ACTIVITY REGULATION</scope>
    <scope>BIOPHYSICOCHEMICAL PROPERTIES</scope>
    <scope>CATALYTIC ACTIVITY</scope>
    <scope>FUNCTION</scope>
</reference>
<reference key="7">
    <citation type="journal article" date="2001" name="J. Mol. Biol.">
        <title>Distinctive features of the two classes of eukaryotic peptide deformylases.</title>
        <authorList>
            <person name="Serero A."/>
            <person name="Giglione C."/>
            <person name="Meinnel T."/>
        </authorList>
    </citation>
    <scope>COFACTOR</scope>
    <scope>ACTIVITY REGULATION</scope>
</reference>
<reference key="8">
    <citation type="journal article" date="2003" name="EMBO J.">
        <title>Control of protein life-span by N-terminal methionine excision.</title>
        <authorList>
            <person name="Giglione C."/>
            <person name="Vallon O."/>
            <person name="Meinnel T."/>
        </authorList>
    </citation>
    <scope>DISRUPTION PHENOTYPE</scope>
</reference>
<reference key="9">
    <citation type="journal article" date="2008" name="Biochem. J.">
        <title>Insights into the substrate specificity of plant peptide deformylase, an essential enzyme with potential for the development of novel biotechnology applications in agriculture.</title>
        <authorList>
            <person name="Dirk L.M."/>
            <person name="Schmidt J.J."/>
            <person name="Cai Y."/>
            <person name="Barnes J.C."/>
            <person name="Hanger K.M."/>
            <person name="Nayak N.R."/>
            <person name="Williams M.A."/>
            <person name="Grossman R.B."/>
            <person name="Houtz R.L."/>
            <person name="Rodgers D.W."/>
        </authorList>
    </citation>
    <scope>X-RAY CRYSTALLOGRAPHY (2.4 ANGSTROMS) OF 65-257</scope>
    <scope>HOMODIMERIZATION</scope>
    <scope>MUTAGENESIS OF TYR-178</scope>
    <scope>FUNCTION</scope>
    <scope>CATALYTIC ACTIVITY</scope>
</reference>
<comment type="function">
    <text evidence="4 5 8">Removes the formyl group from the N-terminal Met of newly synthesized proteins. Has a preferred substrate specificity towards the photosystem II (PS II) D1 polypeptide.</text>
</comment>
<comment type="catalytic activity">
    <reaction evidence="5 8">
        <text>N-terminal N-formyl-L-methionyl-[peptide] + H2O = N-terminal L-methionyl-[peptide] + formate</text>
        <dbReference type="Rhea" id="RHEA:24420"/>
        <dbReference type="Rhea" id="RHEA-COMP:10639"/>
        <dbReference type="Rhea" id="RHEA-COMP:10640"/>
        <dbReference type="ChEBI" id="CHEBI:15377"/>
        <dbReference type="ChEBI" id="CHEBI:15740"/>
        <dbReference type="ChEBI" id="CHEBI:49298"/>
        <dbReference type="ChEBI" id="CHEBI:64731"/>
        <dbReference type="EC" id="3.5.1.88"/>
    </reaction>
    <physiologicalReaction direction="left-to-right" evidence="10">
        <dbReference type="Rhea" id="RHEA:24421"/>
    </physiologicalReaction>
</comment>
<comment type="cofactor">
    <cofactor evidence="6">
        <name>Fe(2+)</name>
        <dbReference type="ChEBI" id="CHEBI:29033"/>
    </cofactor>
    <text evidence="6">Binds 1 Fe(2+) ion.</text>
</comment>
<comment type="activity regulation">
    <text evidence="5 6">Inhibited by actinonin.</text>
</comment>
<comment type="biophysicochemical properties">
    <kinetics>
        <KM evidence="5">130 uM for N-formyl-Met-Leu-rho-nitroanilide</KM>
        <KM evidence="5">3200 uM for N-formyl-Met-Ala-Ser</KM>
        <Vmax evidence="5">20.0 umol/min/mg enzyme toward N-formyl-Met-Leu-rho-nitroanilide</Vmax>
        <Vmax evidence="5">1.3 umol/min/mg enzyme toward N-formyl-Met-Ala-Ser</Vmax>
    </kinetics>
</comment>
<comment type="subunit">
    <text evidence="8">Homodimer.</text>
</comment>
<comment type="subcellular location">
    <subcellularLocation>
        <location>Plastid</location>
        <location>Chloroplast stroma</location>
    </subcellularLocation>
    <subcellularLocation>
        <location>Mitochondrion</location>
    </subcellularLocation>
    <text evidence="4">Reported to be localized to chloroplast and mitochondria based on transient GFP expression in a heterologous system.</text>
</comment>
<comment type="tissue specificity">
    <text evidence="4">Expressed in leaves and flowers.</text>
</comment>
<comment type="disruption phenotype">
    <text evidence="7">Albino.</text>
</comment>
<comment type="similarity">
    <text evidence="9">Belongs to the polypeptide deformylase family.</text>
</comment>
<sequence>MAVCNCFLQAPPLSRILLPVLSRRATTLSAGYGRLKSTVTFCSTVNRTSPLTSSVRAEVKRVSRKDDKVASATDVQFETPLKIVEYPDPILRAKNKRIDIFDENLKNLVDAMFDVMYKTDGIGLSAPQVGLNVQLMVFNPAGEPGEGKEIVLVNPKIKKYSDKLVPFDEGCLSFPGIYAEVVRPQSVKIDARDITGERFSISLSRLPARIFQHEYDHLEGVLFFDRMTDQVLDSIREELEALEKKYEEKTGLPSPERVEARQKRKAGVGFGKR</sequence>
<evidence type="ECO:0000250" key="1"/>
<evidence type="ECO:0000255" key="2"/>
<evidence type="ECO:0000256" key="3">
    <source>
        <dbReference type="SAM" id="MobiDB-lite"/>
    </source>
</evidence>
<evidence type="ECO:0000269" key="4">
    <source>
    </source>
</evidence>
<evidence type="ECO:0000269" key="5">
    <source>
    </source>
</evidence>
<evidence type="ECO:0000269" key="6">
    <source>
    </source>
</evidence>
<evidence type="ECO:0000269" key="7">
    <source>
    </source>
</evidence>
<evidence type="ECO:0000269" key="8">
    <source>
    </source>
</evidence>
<evidence type="ECO:0000305" key="9"/>
<evidence type="ECO:0000305" key="10">
    <source>
    </source>
</evidence>
<evidence type="ECO:0007829" key="11">
    <source>
        <dbReference type="PDB" id="3M6O"/>
    </source>
</evidence>
<evidence type="ECO:0007829" key="12">
    <source>
        <dbReference type="PDB" id="3PN3"/>
    </source>
</evidence>
<keyword id="KW-0002">3D-structure</keyword>
<keyword id="KW-0150">Chloroplast</keyword>
<keyword id="KW-0378">Hydrolase</keyword>
<keyword id="KW-0408">Iron</keyword>
<keyword id="KW-0479">Metal-binding</keyword>
<keyword id="KW-0496">Mitochondrion</keyword>
<keyword id="KW-0934">Plastid</keyword>
<keyword id="KW-0648">Protein biosynthesis</keyword>
<keyword id="KW-1185">Reference proteome</keyword>
<keyword id="KW-0809">Transit peptide</keyword>
<proteinExistence type="evidence at protein level"/>
<dbReference type="EC" id="3.5.1.88" evidence="5 8"/>
<dbReference type="EMBL" id="AF269165">
    <property type="protein sequence ID" value="AAG33980.1"/>
    <property type="molecule type" value="mRNA"/>
</dbReference>
<dbReference type="EMBL" id="AL163792">
    <property type="protein sequence ID" value="CAB87633.1"/>
    <property type="molecule type" value="Genomic_DNA"/>
</dbReference>
<dbReference type="EMBL" id="CP002688">
    <property type="protein sequence ID" value="AED92059.1"/>
    <property type="molecule type" value="Genomic_DNA"/>
</dbReference>
<dbReference type="EMBL" id="CP002688">
    <property type="protein sequence ID" value="AED92060.1"/>
    <property type="molecule type" value="Genomic_DNA"/>
</dbReference>
<dbReference type="EMBL" id="CP002688">
    <property type="protein sequence ID" value="ANM71170.1"/>
    <property type="molecule type" value="Genomic_DNA"/>
</dbReference>
<dbReference type="EMBL" id="AY050879">
    <property type="protein sequence ID" value="AAK92816.1"/>
    <property type="molecule type" value="mRNA"/>
</dbReference>
<dbReference type="EMBL" id="AY096673">
    <property type="protein sequence ID" value="AAM20307.1"/>
    <property type="molecule type" value="mRNA"/>
</dbReference>
<dbReference type="EMBL" id="AY085417">
    <property type="protein sequence ID" value="AAM62644.1"/>
    <property type="molecule type" value="mRNA"/>
</dbReference>
<dbReference type="PIR" id="T48639">
    <property type="entry name" value="T48639"/>
</dbReference>
<dbReference type="RefSeq" id="NP_001332718.1">
    <property type="nucleotide sequence ID" value="NM_001343352.1"/>
</dbReference>
<dbReference type="RefSeq" id="NP_196970.1">
    <property type="nucleotide sequence ID" value="NM_121470.3"/>
</dbReference>
<dbReference type="RefSeq" id="NP_850821.1">
    <property type="nucleotide sequence ID" value="NM_180490.1"/>
</dbReference>
<dbReference type="PDB" id="3CPM">
    <property type="method" value="X-ray"/>
    <property type="resolution" value="2.40 A"/>
    <property type="chains" value="A=65-257"/>
</dbReference>
<dbReference type="PDB" id="3M6O">
    <property type="method" value="X-ray"/>
    <property type="resolution" value="2.00 A"/>
    <property type="chains" value="A/B=83-273"/>
</dbReference>
<dbReference type="PDB" id="3M6P">
    <property type="method" value="X-ray"/>
    <property type="resolution" value="2.00 A"/>
    <property type="chains" value="A/B=83-273"/>
</dbReference>
<dbReference type="PDB" id="3M6Q">
    <property type="method" value="X-ray"/>
    <property type="resolution" value="2.40 A"/>
    <property type="chains" value="A=83-273"/>
</dbReference>
<dbReference type="PDB" id="3M6R">
    <property type="method" value="X-ray"/>
    <property type="resolution" value="2.40 A"/>
    <property type="chains" value="A/B/C/D=83-273"/>
</dbReference>
<dbReference type="PDB" id="3O3J">
    <property type="method" value="X-ray"/>
    <property type="resolution" value="3.00 A"/>
    <property type="chains" value="A=83-273"/>
</dbReference>
<dbReference type="PDB" id="3PN2">
    <property type="method" value="X-ray"/>
    <property type="resolution" value="2.00 A"/>
    <property type="chains" value="A=83-273"/>
</dbReference>
<dbReference type="PDB" id="3PN3">
    <property type="method" value="X-ray"/>
    <property type="resolution" value="1.30 A"/>
    <property type="chains" value="A/B=83-273"/>
</dbReference>
<dbReference type="PDB" id="3PN4">
    <property type="method" value="X-ray"/>
    <property type="resolution" value="1.90 A"/>
    <property type="chains" value="A=83-273"/>
</dbReference>
<dbReference type="PDB" id="3PN5">
    <property type="method" value="X-ray"/>
    <property type="resolution" value="2.30 A"/>
    <property type="chains" value="A=83-273"/>
</dbReference>
<dbReference type="PDB" id="3PN6">
    <property type="method" value="X-ray"/>
    <property type="resolution" value="2.10 A"/>
    <property type="chains" value="A/B=83-273"/>
</dbReference>
<dbReference type="PDBsum" id="3CPM"/>
<dbReference type="PDBsum" id="3M6O"/>
<dbReference type="PDBsum" id="3M6P"/>
<dbReference type="PDBsum" id="3M6Q"/>
<dbReference type="PDBsum" id="3M6R"/>
<dbReference type="PDBsum" id="3O3J"/>
<dbReference type="PDBsum" id="3PN2"/>
<dbReference type="PDBsum" id="3PN3"/>
<dbReference type="PDBsum" id="3PN4"/>
<dbReference type="PDBsum" id="3PN5"/>
<dbReference type="PDBsum" id="3PN6"/>
<dbReference type="SMR" id="Q9FUZ2"/>
<dbReference type="BioGRID" id="16595">
    <property type="interactions" value="3"/>
</dbReference>
<dbReference type="FunCoup" id="Q9FUZ2">
    <property type="interactions" value="815"/>
</dbReference>
<dbReference type="IntAct" id="Q9FUZ2">
    <property type="interactions" value="2"/>
</dbReference>
<dbReference type="STRING" id="3702.Q9FUZ2"/>
<dbReference type="iPTMnet" id="Q9FUZ2"/>
<dbReference type="PaxDb" id="3702-AT5G14660.1"/>
<dbReference type="ProteomicsDB" id="224073"/>
<dbReference type="EnsemblPlants" id="AT5G14660.1">
    <property type="protein sequence ID" value="AT5G14660.1"/>
    <property type="gene ID" value="AT5G14660"/>
</dbReference>
<dbReference type="EnsemblPlants" id="AT5G14660.2">
    <property type="protein sequence ID" value="AT5G14660.2"/>
    <property type="gene ID" value="AT5G14660"/>
</dbReference>
<dbReference type="EnsemblPlants" id="AT5G14660.3">
    <property type="protein sequence ID" value="AT5G14660.3"/>
    <property type="gene ID" value="AT5G14660"/>
</dbReference>
<dbReference type="GeneID" id="831318"/>
<dbReference type="Gramene" id="AT5G14660.1">
    <property type="protein sequence ID" value="AT5G14660.1"/>
    <property type="gene ID" value="AT5G14660"/>
</dbReference>
<dbReference type="Gramene" id="AT5G14660.2">
    <property type="protein sequence ID" value="AT5G14660.2"/>
    <property type="gene ID" value="AT5G14660"/>
</dbReference>
<dbReference type="Gramene" id="AT5G14660.3">
    <property type="protein sequence ID" value="AT5G14660.3"/>
    <property type="gene ID" value="AT5G14660"/>
</dbReference>
<dbReference type="KEGG" id="ath:AT5G14660"/>
<dbReference type="Araport" id="AT5G14660"/>
<dbReference type="TAIR" id="AT5G14660">
    <property type="gene designation" value="PDF1B"/>
</dbReference>
<dbReference type="eggNOG" id="KOG3137">
    <property type="taxonomic scope" value="Eukaryota"/>
</dbReference>
<dbReference type="HOGENOM" id="CLU_061901_0_1_1"/>
<dbReference type="InParanoid" id="Q9FUZ2"/>
<dbReference type="OMA" id="CAAWLQP"/>
<dbReference type="PhylomeDB" id="Q9FUZ2"/>
<dbReference type="BRENDA" id="3.5.1.88">
    <property type="organism ID" value="399"/>
</dbReference>
<dbReference type="SABIO-RK" id="Q9FUZ2"/>
<dbReference type="EvolutionaryTrace" id="Q9FUZ2"/>
<dbReference type="PRO" id="PR:Q9FUZ2"/>
<dbReference type="Proteomes" id="UP000006548">
    <property type="component" value="Chromosome 5"/>
</dbReference>
<dbReference type="ExpressionAtlas" id="Q9FUZ2">
    <property type="expression patterns" value="baseline and differential"/>
</dbReference>
<dbReference type="GO" id="GO:0009507">
    <property type="term" value="C:chloroplast"/>
    <property type="evidence" value="ECO:0007005"/>
    <property type="project" value="TAIR"/>
</dbReference>
<dbReference type="GO" id="GO:0009570">
    <property type="term" value="C:chloroplast stroma"/>
    <property type="evidence" value="ECO:0007669"/>
    <property type="project" value="UniProtKB-SubCell"/>
</dbReference>
<dbReference type="GO" id="GO:0005739">
    <property type="term" value="C:mitochondrion"/>
    <property type="evidence" value="ECO:0007669"/>
    <property type="project" value="UniProtKB-SubCell"/>
</dbReference>
<dbReference type="GO" id="GO:0009536">
    <property type="term" value="C:plastid"/>
    <property type="evidence" value="ECO:0007005"/>
    <property type="project" value="TAIR"/>
</dbReference>
<dbReference type="GO" id="GO:0046872">
    <property type="term" value="F:metal ion binding"/>
    <property type="evidence" value="ECO:0007669"/>
    <property type="project" value="UniProtKB-KW"/>
</dbReference>
<dbReference type="GO" id="GO:0042586">
    <property type="term" value="F:peptide deformylase activity"/>
    <property type="evidence" value="ECO:0000314"/>
    <property type="project" value="TAIR"/>
</dbReference>
<dbReference type="GO" id="GO:0006412">
    <property type="term" value="P:translation"/>
    <property type="evidence" value="ECO:0007669"/>
    <property type="project" value="UniProtKB-KW"/>
</dbReference>
<dbReference type="CDD" id="cd00487">
    <property type="entry name" value="Pep_deformylase"/>
    <property type="match status" value="1"/>
</dbReference>
<dbReference type="FunFam" id="3.90.45.10:FF:000006">
    <property type="entry name" value="Peptide deformylase"/>
    <property type="match status" value="1"/>
</dbReference>
<dbReference type="Gene3D" id="3.90.45.10">
    <property type="entry name" value="Peptide deformylase"/>
    <property type="match status" value="1"/>
</dbReference>
<dbReference type="HAMAP" id="MF_00163">
    <property type="entry name" value="Pep_deformylase"/>
    <property type="match status" value="1"/>
</dbReference>
<dbReference type="InterPro" id="IPR023635">
    <property type="entry name" value="Peptide_deformylase"/>
</dbReference>
<dbReference type="InterPro" id="IPR036821">
    <property type="entry name" value="Peptide_deformylase_sf"/>
</dbReference>
<dbReference type="NCBIfam" id="TIGR00079">
    <property type="entry name" value="pept_deformyl"/>
    <property type="match status" value="1"/>
</dbReference>
<dbReference type="NCBIfam" id="NF001159">
    <property type="entry name" value="PRK00150.1-3"/>
    <property type="match status" value="1"/>
</dbReference>
<dbReference type="PANTHER" id="PTHR10458">
    <property type="entry name" value="PEPTIDE DEFORMYLASE"/>
    <property type="match status" value="1"/>
</dbReference>
<dbReference type="PANTHER" id="PTHR10458:SF22">
    <property type="entry name" value="PEPTIDE DEFORMYLASE"/>
    <property type="match status" value="1"/>
</dbReference>
<dbReference type="Pfam" id="PF01327">
    <property type="entry name" value="Pep_deformylase"/>
    <property type="match status" value="1"/>
</dbReference>
<dbReference type="PRINTS" id="PR01576">
    <property type="entry name" value="PDEFORMYLASE"/>
</dbReference>
<dbReference type="SUPFAM" id="SSF56420">
    <property type="entry name" value="Peptide deformylase"/>
    <property type="match status" value="1"/>
</dbReference>